<keyword id="KW-0002">3D-structure</keyword>
<keyword id="KW-0010">Activator</keyword>
<keyword id="KW-0238">DNA-binding</keyword>
<keyword id="KW-0426">Late protein</keyword>
<keyword id="KW-1185">Reference proteome</keyword>
<keyword id="KW-0804">Transcription</keyword>
<keyword id="KW-0805">Transcription regulation</keyword>
<keyword id="KW-0946">Virion</keyword>
<comment type="function">
    <text evidence="2">Acts with RNA polymerase to initiate transcription from early gene promoters. Is recruited by the RPO-associated protein of 94 kDa RAP94/OPG109 to form the early transcription complex, which also contains the core RNA polymerase. ETF heterodimer binds to early gene promoters.</text>
</comment>
<comment type="subunit">
    <text evidence="2">Heterodimer of a 70 kDa and a 82 kDa subunit. Part of the early transcription complex composed of ETF, RAP94/OPG109, and the DNA-directed RNA polymerase.</text>
</comment>
<comment type="subcellular location">
    <subcellularLocation>
        <location evidence="2">Virion</location>
    </subcellularLocation>
    <text evidence="1">All the enzymes and other proteins required to synthesize early mRNAs are packaged within the virion core along with the DNA genome. This is necessary because viral early mRNAs are synthesized within minutes after virus entry into the cell and are extruded through pores in the core particle (By similarity).</text>
</comment>
<comment type="similarity">
    <text evidence="3">Belongs to the poxviridae VETF large subunit family.</text>
</comment>
<proteinExistence type="evidence at protein level"/>
<protein>
    <recommendedName>
        <fullName>Early transcription factor 82 kDa subunit</fullName>
    </recommendedName>
    <alternativeName>
        <fullName>ETF large subunit</fullName>
    </alternativeName>
    <alternativeName>
        <fullName>VETF A7 subunit</fullName>
    </alternativeName>
    <alternativeName>
        <fullName>Vaccinia virus early transcription factor large subunit</fullName>
        <shortName>VETF large subunit</shortName>
    </alternativeName>
</protein>
<organismHost>
    <name type="scientific">Homo sapiens</name>
    <name type="common">Human</name>
    <dbReference type="NCBI Taxonomy" id="9606"/>
</organismHost>
<accession>P20635</accession>
<reference key="1">
    <citation type="journal article" date="1990" name="Virology">
        <title>The complete DNA sequence of vaccinia virus.</title>
        <authorList>
            <person name="Goebel S.J."/>
            <person name="Johnson G.P."/>
            <person name="Perkus M.E."/>
            <person name="Davis S.W."/>
            <person name="Winslow J.P."/>
            <person name="Paoletti E."/>
        </authorList>
    </citation>
    <scope>NUCLEOTIDE SEQUENCE [LARGE SCALE GENOMIC DNA]</scope>
</reference>
<reference key="2">
    <citation type="journal article" date="1990" name="Virology">
        <title>Appendix to 'The complete DNA sequence of vaccinia virus'.</title>
        <authorList>
            <person name="Goebel S.J."/>
            <person name="Johnson G.P."/>
            <person name="Perkus M.E."/>
            <person name="Davis S.W."/>
            <person name="Winslow J.P."/>
            <person name="Paoletti E."/>
        </authorList>
    </citation>
    <scope>NUCLEOTIDE SEQUENCE [LARGE SCALE GENOMIC DNA]</scope>
</reference>
<feature type="chain" id="PRO_0000099080" description="Early transcription factor 82 kDa subunit">
    <location>
        <begin position="1"/>
        <end position="710"/>
    </location>
</feature>
<sequence>MRYIVSPQLVLQVGKGQEVERALYLTPYDYIDEKSPIYYFLRSHLNIQQPEIVKRHILLTLRMTQLKGYLGNLLDIKDDIIIYSHKNNLEYSYVDNTIFNPFVYTQKKTLLKNDSFLYNVYPGACDFLVIWVVRACDTSIPEFGSYEDVDNNIIKFETMLMEVFPQLDLDITVESKFNNIFRTNLKLTGLKKIIQRVQDLDINYKSLLSRYDEHFINMTGNHFILNDEQLNLSIWDLDGTLALSSDGDTVMINNVKLFTDLVSDIDTQMERIKGDITYKVHLATPINSRIKLDIETSFIFIETATNNILLSSDKKISIILAKNHISIKVKNHIPNIEKYFTFLVIAINAMFNSVQKSADFTKVETVYWSRICQNTKNKNRKPIIINYLDPGMKKISNNFYRSDEKEVFINDNGIMFTCMDPLGKYNKVGFLNIFHDMRKYCIPCCFLHDQSHRSTFSSCVHQIDVEKKIVSPYILNFGKVVTESKMSFLPIIFDAFLNDGMTANMEQDNKRLKETSGYHIVRCCAGDDIVRLRTTSDIIQFVNEDKNILIVNDMVYFPMNASDIGKKIHILIQEIVHEVMIVKKKESSDKIDFFPPNYKLLKDLFPKQTIQTPIQSDAGMVLTTDGFYIDGKLFNEDLSSKYVTFTKNVIASDAVAKYFSPLFKYVISEAKDRFIKTWMINIMIHMNVDPNNIIPTLEKYYPNSGRAQIN</sequence>
<organism>
    <name type="scientific">Vaccinia virus (strain Copenhagen)</name>
    <name type="common">VACV</name>
    <dbReference type="NCBI Taxonomy" id="10249"/>
    <lineage>
        <taxon>Viruses</taxon>
        <taxon>Varidnaviria</taxon>
        <taxon>Bamfordvirae</taxon>
        <taxon>Nucleocytoviricota</taxon>
        <taxon>Pokkesviricetes</taxon>
        <taxon>Chitovirales</taxon>
        <taxon>Poxviridae</taxon>
        <taxon>Chordopoxvirinae</taxon>
        <taxon>Orthopoxvirus</taxon>
        <taxon>Vaccinia virus</taxon>
    </lineage>
</organism>
<evidence type="ECO:0000250" key="1"/>
<evidence type="ECO:0000250" key="2">
    <source>
        <dbReference type="UniProtKB" id="P20636"/>
    </source>
</evidence>
<evidence type="ECO:0000305" key="3"/>
<gene>
    <name type="primary">OPG133</name>
    <name type="synonym">VETFL</name>
    <name type="ORF">A7L</name>
</gene>
<dbReference type="EMBL" id="M35027">
    <property type="protein sequence ID" value="AAA48124.1"/>
    <property type="molecule type" value="Genomic_DNA"/>
</dbReference>
<dbReference type="PIR" id="I42517">
    <property type="entry name" value="I42517"/>
</dbReference>
<dbReference type="PDB" id="8RQK">
    <property type="method" value="EM"/>
    <property type="resolution" value="2.65 A"/>
    <property type="chains" value="K=1-710"/>
</dbReference>
<dbReference type="PDBsum" id="8RQK"/>
<dbReference type="EMDB" id="EMD-19442"/>
<dbReference type="SMR" id="P20635"/>
<dbReference type="Proteomes" id="UP000008269">
    <property type="component" value="Segment"/>
</dbReference>
<dbReference type="GO" id="GO:0044423">
    <property type="term" value="C:virion component"/>
    <property type="evidence" value="ECO:0007669"/>
    <property type="project" value="UniProtKB-KW"/>
</dbReference>
<dbReference type="GO" id="GO:0003677">
    <property type="term" value="F:DNA binding"/>
    <property type="evidence" value="ECO:0007669"/>
    <property type="project" value="UniProtKB-KW"/>
</dbReference>
<dbReference type="GO" id="GO:0045893">
    <property type="term" value="P:positive regulation of DNA-templated transcription"/>
    <property type="evidence" value="ECO:0007669"/>
    <property type="project" value="InterPro"/>
</dbReference>
<dbReference type="InterPro" id="IPR007532">
    <property type="entry name" value="Poxvirus_early-TF_lsu"/>
</dbReference>
<dbReference type="Pfam" id="PF04441">
    <property type="entry name" value="Pox_VERT_large"/>
    <property type="match status" value="1"/>
</dbReference>
<name>ETF2_VACCC</name>